<name>CPXS2_PAUCH</name>
<feature type="chain" id="PRO_0000403151" description="Chromophore lyase CpcS/CpeS 2">
    <location>
        <begin position="1"/>
        <end position="198"/>
    </location>
</feature>
<comment type="function">
    <text evidence="1">Covalently attaches a chromophore to Cys residue(s) of phycobiliproteins.</text>
</comment>
<comment type="subcellular location">
    <subcellularLocation>
        <location>Plastid</location>
        <location>Organellar chromatophore</location>
    </subcellularLocation>
</comment>
<comment type="similarity">
    <text evidence="1">Belongs to the CpcS/CpeS biliprotein lyase family.</text>
</comment>
<sequence length="198" mass="22281">MSLSIPDAFSFFKLSCGSWVSQRSSHHLLHRRAEPGASLIVVKELSATDDRLLSVAKLHQKNPNMLVGGCWVRWSGSMAWDQEGESHEGESIFGLIPTDENGREGLLLRDRGYAETAPVAGKFQMDEHDALLLSTSYDTMISNERFWFTGPDIRLRTSVVEGLSNTASFCIETRREYKAILNDNLNTNNDLMHSKFGW</sequence>
<protein>
    <recommendedName>
        <fullName evidence="1">Chromophore lyase CpcS/CpeS 2</fullName>
        <ecNumber evidence="1">4.-.-.-</ecNumber>
    </recommendedName>
</protein>
<dbReference type="EC" id="4.-.-.-" evidence="1"/>
<dbReference type="EMBL" id="CP000815">
    <property type="protein sequence ID" value="ACB43078.1"/>
    <property type="molecule type" value="Genomic_DNA"/>
</dbReference>
<dbReference type="RefSeq" id="YP_002049288.1">
    <property type="nucleotide sequence ID" value="NC_011087.1"/>
</dbReference>
<dbReference type="SMR" id="B1X559"/>
<dbReference type="GeneID" id="6481339"/>
<dbReference type="GO" id="GO:0070111">
    <property type="term" value="C:organellar chromatophore"/>
    <property type="evidence" value="ECO:0007669"/>
    <property type="project" value="UniProtKB-SubCell"/>
</dbReference>
<dbReference type="GO" id="GO:0009536">
    <property type="term" value="C:plastid"/>
    <property type="evidence" value="ECO:0007669"/>
    <property type="project" value="UniProtKB-KW"/>
</dbReference>
<dbReference type="GO" id="GO:0016829">
    <property type="term" value="F:lyase activity"/>
    <property type="evidence" value="ECO:0007669"/>
    <property type="project" value="UniProtKB-KW"/>
</dbReference>
<dbReference type="CDD" id="cd19433">
    <property type="entry name" value="lipocalin_CpcS-CpeS"/>
    <property type="match status" value="1"/>
</dbReference>
<dbReference type="Gene3D" id="2.40.128.20">
    <property type="match status" value="1"/>
</dbReference>
<dbReference type="HAMAP" id="MF_01459">
    <property type="entry name" value="Chrphore_lyase_CpxS"/>
    <property type="match status" value="1"/>
</dbReference>
<dbReference type="InterPro" id="IPR012674">
    <property type="entry name" value="Calycin"/>
</dbReference>
<dbReference type="InterPro" id="IPR018536">
    <property type="entry name" value="CpcS/CpeS"/>
</dbReference>
<dbReference type="Pfam" id="PF09367">
    <property type="entry name" value="CpeS"/>
    <property type="match status" value="1"/>
</dbReference>
<evidence type="ECO:0000255" key="1">
    <source>
        <dbReference type="HAMAP-Rule" id="MF_01459"/>
    </source>
</evidence>
<keyword id="KW-0456">Lyase</keyword>
<keyword id="KW-0994">Organellar chromatophore</keyword>
<keyword id="KW-0934">Plastid</keyword>
<reference key="1">
    <citation type="journal article" date="2008" name="Curr. Biol.">
        <title>Chromatophore genome sequence of Paulinella sheds light on acquisition of photosynthesis by eukaryotes.</title>
        <authorList>
            <person name="Nowack E.C.M."/>
            <person name="Melkonian M."/>
            <person name="Gloeckner G."/>
        </authorList>
    </citation>
    <scope>NUCLEOTIDE SEQUENCE [LARGE SCALE GENOMIC DNA]</scope>
</reference>
<gene>
    <name evidence="1" type="primary">cpcS2</name>
    <name type="ordered locus">PCC_0659</name>
</gene>
<accession>B1X559</accession>
<geneLocation type="organellar chromatophore"/>
<organism>
    <name type="scientific">Paulinella chromatophora</name>
    <dbReference type="NCBI Taxonomy" id="39717"/>
    <lineage>
        <taxon>Eukaryota</taxon>
        <taxon>Sar</taxon>
        <taxon>Rhizaria</taxon>
        <taxon>Cercozoa</taxon>
        <taxon>Imbricatea</taxon>
        <taxon>Silicofilosea</taxon>
        <taxon>Euglyphida</taxon>
        <taxon>Paulinellidae</taxon>
        <taxon>Paulinella</taxon>
    </lineage>
</organism>
<proteinExistence type="inferred from homology"/>